<evidence type="ECO:0000255" key="1">
    <source>
        <dbReference type="HAMAP-Rule" id="MF_00741"/>
    </source>
</evidence>
<name>PUR5_STACT</name>
<reference key="1">
    <citation type="journal article" date="2009" name="Appl. Environ. Microbiol.">
        <title>Genome analysis of the meat starter culture bacterium Staphylococcus carnosus TM300.</title>
        <authorList>
            <person name="Rosenstein R."/>
            <person name="Nerz C."/>
            <person name="Biswas L."/>
            <person name="Resch A."/>
            <person name="Raddatz G."/>
            <person name="Schuster S.C."/>
            <person name="Goetz F."/>
        </authorList>
    </citation>
    <scope>NUCLEOTIDE SEQUENCE [LARGE SCALE GENOMIC DNA]</scope>
    <source>
        <strain>TM300</strain>
    </source>
</reference>
<keyword id="KW-0067">ATP-binding</keyword>
<keyword id="KW-0963">Cytoplasm</keyword>
<keyword id="KW-0436">Ligase</keyword>
<keyword id="KW-0547">Nucleotide-binding</keyword>
<keyword id="KW-0658">Purine biosynthesis</keyword>
<keyword id="KW-1185">Reference proteome</keyword>
<sequence length="345" mass="37394">MAESYKNAGVDIHAGYEAVERMKSHVQRTMRKEVLGGLGGFGAAFDLSQLNMQKPVLVSGTDGVGTKLKLAIDHDKHDTIGIDAVAMCVNDILTTGAEPLYFLDYIATNKVVPEVIEQIVKGVSDGCEETNTALIGGETAEMGEMYHEGEYDLAGFAVGAVEKDDYIDGSTVKPGQVIIGLASSGIHSNGYSLVRHLIKASEVDLNAEFENGKSYLDTFLEPTRLYVKPVLAVKEQVKLYAMTHITGGGFYENIPRALPEGVTAEIDVQSFPTPAVFDWLQKEGNIETEEMYNIFNMGIGFTLVVDEAEAEKTLSILKEQNVDAYQIGKITEASDEPIVLTGVKA</sequence>
<comment type="catalytic activity">
    <reaction evidence="1">
        <text>2-formamido-N(1)-(5-O-phospho-beta-D-ribosyl)acetamidine + ATP = 5-amino-1-(5-phospho-beta-D-ribosyl)imidazole + ADP + phosphate + H(+)</text>
        <dbReference type="Rhea" id="RHEA:23032"/>
        <dbReference type="ChEBI" id="CHEBI:15378"/>
        <dbReference type="ChEBI" id="CHEBI:30616"/>
        <dbReference type="ChEBI" id="CHEBI:43474"/>
        <dbReference type="ChEBI" id="CHEBI:137981"/>
        <dbReference type="ChEBI" id="CHEBI:147287"/>
        <dbReference type="ChEBI" id="CHEBI:456216"/>
        <dbReference type="EC" id="6.3.3.1"/>
    </reaction>
</comment>
<comment type="pathway">
    <text evidence="1">Purine metabolism; IMP biosynthesis via de novo pathway; 5-amino-1-(5-phospho-D-ribosyl)imidazole from N(2)-formyl-N(1)-(5-phospho-D-ribosyl)glycinamide: step 2/2.</text>
</comment>
<comment type="subcellular location">
    <subcellularLocation>
        <location evidence="1">Cytoplasm</location>
    </subcellularLocation>
</comment>
<comment type="similarity">
    <text evidence="1">Belongs to the AIR synthase family.</text>
</comment>
<organism>
    <name type="scientific">Staphylococcus carnosus (strain TM300)</name>
    <dbReference type="NCBI Taxonomy" id="396513"/>
    <lineage>
        <taxon>Bacteria</taxon>
        <taxon>Bacillati</taxon>
        <taxon>Bacillota</taxon>
        <taxon>Bacilli</taxon>
        <taxon>Bacillales</taxon>
        <taxon>Staphylococcaceae</taxon>
        <taxon>Staphylococcus</taxon>
    </lineage>
</organism>
<proteinExistence type="inferred from homology"/>
<gene>
    <name evidence="1" type="primary">purM</name>
    <name type="ordered locus">Sca_0693</name>
</gene>
<accession>B9DQ40</accession>
<protein>
    <recommendedName>
        <fullName evidence="1">Phosphoribosylformylglycinamidine cyclo-ligase</fullName>
        <ecNumber evidence="1">6.3.3.1</ecNumber>
    </recommendedName>
    <alternativeName>
        <fullName evidence="1">AIR synthase</fullName>
    </alternativeName>
    <alternativeName>
        <fullName evidence="1">AIRS</fullName>
    </alternativeName>
    <alternativeName>
        <fullName evidence="1">Phosphoribosyl-aminoimidazole synthetase</fullName>
    </alternativeName>
</protein>
<feature type="chain" id="PRO_1000148298" description="Phosphoribosylformylglycinamidine cyclo-ligase">
    <location>
        <begin position="1"/>
        <end position="345"/>
    </location>
</feature>
<dbReference type="EC" id="6.3.3.1" evidence="1"/>
<dbReference type="EMBL" id="AM295250">
    <property type="protein sequence ID" value="CAL27604.1"/>
    <property type="molecule type" value="Genomic_DNA"/>
</dbReference>
<dbReference type="RefSeq" id="WP_015899947.1">
    <property type="nucleotide sequence ID" value="NC_012121.1"/>
</dbReference>
<dbReference type="SMR" id="B9DQ40"/>
<dbReference type="GeneID" id="93795631"/>
<dbReference type="KEGG" id="sca:SCA_0693"/>
<dbReference type="eggNOG" id="COG0150">
    <property type="taxonomic scope" value="Bacteria"/>
</dbReference>
<dbReference type="HOGENOM" id="CLU_047116_0_0_9"/>
<dbReference type="OrthoDB" id="9802507at2"/>
<dbReference type="BioCyc" id="SCAR396513:SCA_RS03520-MONOMER"/>
<dbReference type="UniPathway" id="UPA00074">
    <property type="reaction ID" value="UER00129"/>
</dbReference>
<dbReference type="Proteomes" id="UP000000444">
    <property type="component" value="Chromosome"/>
</dbReference>
<dbReference type="GO" id="GO:0005829">
    <property type="term" value="C:cytosol"/>
    <property type="evidence" value="ECO:0007669"/>
    <property type="project" value="TreeGrafter"/>
</dbReference>
<dbReference type="GO" id="GO:0005524">
    <property type="term" value="F:ATP binding"/>
    <property type="evidence" value="ECO:0007669"/>
    <property type="project" value="UniProtKB-KW"/>
</dbReference>
<dbReference type="GO" id="GO:0004637">
    <property type="term" value="F:phosphoribosylamine-glycine ligase activity"/>
    <property type="evidence" value="ECO:0007669"/>
    <property type="project" value="TreeGrafter"/>
</dbReference>
<dbReference type="GO" id="GO:0004641">
    <property type="term" value="F:phosphoribosylformylglycinamidine cyclo-ligase activity"/>
    <property type="evidence" value="ECO:0007669"/>
    <property type="project" value="UniProtKB-UniRule"/>
</dbReference>
<dbReference type="GO" id="GO:0006189">
    <property type="term" value="P:'de novo' IMP biosynthetic process"/>
    <property type="evidence" value="ECO:0007669"/>
    <property type="project" value="UniProtKB-UniRule"/>
</dbReference>
<dbReference type="GO" id="GO:0046084">
    <property type="term" value="P:adenine biosynthetic process"/>
    <property type="evidence" value="ECO:0007669"/>
    <property type="project" value="TreeGrafter"/>
</dbReference>
<dbReference type="CDD" id="cd02196">
    <property type="entry name" value="PurM"/>
    <property type="match status" value="1"/>
</dbReference>
<dbReference type="FunFam" id="3.30.1330.10:FF:000001">
    <property type="entry name" value="Phosphoribosylformylglycinamidine cyclo-ligase"/>
    <property type="match status" value="1"/>
</dbReference>
<dbReference type="FunFam" id="3.90.650.10:FF:000001">
    <property type="entry name" value="Phosphoribosylformylglycinamidine cyclo-ligase"/>
    <property type="match status" value="1"/>
</dbReference>
<dbReference type="Gene3D" id="3.90.650.10">
    <property type="entry name" value="PurM-like C-terminal domain"/>
    <property type="match status" value="1"/>
</dbReference>
<dbReference type="Gene3D" id="3.30.1330.10">
    <property type="entry name" value="PurM-like, N-terminal domain"/>
    <property type="match status" value="1"/>
</dbReference>
<dbReference type="HAMAP" id="MF_00741">
    <property type="entry name" value="AIRS"/>
    <property type="match status" value="1"/>
</dbReference>
<dbReference type="InterPro" id="IPR010918">
    <property type="entry name" value="PurM-like_C_dom"/>
</dbReference>
<dbReference type="InterPro" id="IPR036676">
    <property type="entry name" value="PurM-like_C_sf"/>
</dbReference>
<dbReference type="InterPro" id="IPR016188">
    <property type="entry name" value="PurM-like_N"/>
</dbReference>
<dbReference type="InterPro" id="IPR036921">
    <property type="entry name" value="PurM-like_N_sf"/>
</dbReference>
<dbReference type="InterPro" id="IPR004733">
    <property type="entry name" value="PurM_cligase"/>
</dbReference>
<dbReference type="NCBIfam" id="TIGR00878">
    <property type="entry name" value="purM"/>
    <property type="match status" value="1"/>
</dbReference>
<dbReference type="PANTHER" id="PTHR10520:SF12">
    <property type="entry name" value="TRIFUNCTIONAL PURINE BIOSYNTHETIC PROTEIN ADENOSINE-3"/>
    <property type="match status" value="1"/>
</dbReference>
<dbReference type="PANTHER" id="PTHR10520">
    <property type="entry name" value="TRIFUNCTIONAL PURINE BIOSYNTHETIC PROTEIN ADENOSINE-3-RELATED"/>
    <property type="match status" value="1"/>
</dbReference>
<dbReference type="Pfam" id="PF00586">
    <property type="entry name" value="AIRS"/>
    <property type="match status" value="1"/>
</dbReference>
<dbReference type="Pfam" id="PF02769">
    <property type="entry name" value="AIRS_C"/>
    <property type="match status" value="1"/>
</dbReference>
<dbReference type="SUPFAM" id="SSF56042">
    <property type="entry name" value="PurM C-terminal domain-like"/>
    <property type="match status" value="1"/>
</dbReference>
<dbReference type="SUPFAM" id="SSF55326">
    <property type="entry name" value="PurM N-terminal domain-like"/>
    <property type="match status" value="1"/>
</dbReference>